<proteinExistence type="predicted"/>
<gene>
    <name type="ORF">DDB_G0284297</name>
</gene>
<accession>Q54Q02</accession>
<protein>
    <recommendedName>
        <fullName>Putative uncharacterized protein DDB_G0284297</fullName>
    </recommendedName>
</protein>
<dbReference type="EMBL" id="AAFI02000064">
    <property type="protein sequence ID" value="EAL65337.1"/>
    <property type="molecule type" value="Genomic_DNA"/>
</dbReference>
<dbReference type="RefSeq" id="XP_638643.1">
    <property type="nucleotide sequence ID" value="XM_633551.1"/>
</dbReference>
<dbReference type="SMR" id="Q54Q02"/>
<dbReference type="PaxDb" id="44689-DDB0215727"/>
<dbReference type="EnsemblProtists" id="EAL65337">
    <property type="protein sequence ID" value="EAL65337"/>
    <property type="gene ID" value="DDB_G0284297"/>
</dbReference>
<dbReference type="GeneID" id="8624474"/>
<dbReference type="KEGG" id="ddi:DDB_G0284297"/>
<dbReference type="HOGENOM" id="CLU_2946472_0_0_1"/>
<dbReference type="InParanoid" id="Q54Q02"/>
<dbReference type="PRO" id="PR:Q54Q02"/>
<dbReference type="Proteomes" id="UP000002195">
    <property type="component" value="Chromosome 4"/>
</dbReference>
<name>Y5727_DICDI</name>
<keyword id="KW-1185">Reference proteome</keyword>
<reference key="1">
    <citation type="journal article" date="2005" name="Nature">
        <title>The genome of the social amoeba Dictyostelium discoideum.</title>
        <authorList>
            <person name="Eichinger L."/>
            <person name="Pachebat J.A."/>
            <person name="Gloeckner G."/>
            <person name="Rajandream M.A."/>
            <person name="Sucgang R."/>
            <person name="Berriman M."/>
            <person name="Song J."/>
            <person name="Olsen R."/>
            <person name="Szafranski K."/>
            <person name="Xu Q."/>
            <person name="Tunggal B."/>
            <person name="Kummerfeld S."/>
            <person name="Madera M."/>
            <person name="Konfortov B.A."/>
            <person name="Rivero F."/>
            <person name="Bankier A.T."/>
            <person name="Lehmann R."/>
            <person name="Hamlin N."/>
            <person name="Davies R."/>
            <person name="Gaudet P."/>
            <person name="Fey P."/>
            <person name="Pilcher K."/>
            <person name="Chen G."/>
            <person name="Saunders D."/>
            <person name="Sodergren E.J."/>
            <person name="Davis P."/>
            <person name="Kerhornou A."/>
            <person name="Nie X."/>
            <person name="Hall N."/>
            <person name="Anjard C."/>
            <person name="Hemphill L."/>
            <person name="Bason N."/>
            <person name="Farbrother P."/>
            <person name="Desany B."/>
            <person name="Just E."/>
            <person name="Morio T."/>
            <person name="Rost R."/>
            <person name="Churcher C.M."/>
            <person name="Cooper J."/>
            <person name="Haydock S."/>
            <person name="van Driessche N."/>
            <person name="Cronin A."/>
            <person name="Goodhead I."/>
            <person name="Muzny D.M."/>
            <person name="Mourier T."/>
            <person name="Pain A."/>
            <person name="Lu M."/>
            <person name="Harper D."/>
            <person name="Lindsay R."/>
            <person name="Hauser H."/>
            <person name="James K.D."/>
            <person name="Quiles M."/>
            <person name="Madan Babu M."/>
            <person name="Saito T."/>
            <person name="Buchrieser C."/>
            <person name="Wardroper A."/>
            <person name="Felder M."/>
            <person name="Thangavelu M."/>
            <person name="Johnson D."/>
            <person name="Knights A."/>
            <person name="Loulseged H."/>
            <person name="Mungall K.L."/>
            <person name="Oliver K."/>
            <person name="Price C."/>
            <person name="Quail M.A."/>
            <person name="Urushihara H."/>
            <person name="Hernandez J."/>
            <person name="Rabbinowitsch E."/>
            <person name="Steffen D."/>
            <person name="Sanders M."/>
            <person name="Ma J."/>
            <person name="Kohara Y."/>
            <person name="Sharp S."/>
            <person name="Simmonds M.N."/>
            <person name="Spiegler S."/>
            <person name="Tivey A."/>
            <person name="Sugano S."/>
            <person name="White B."/>
            <person name="Walker D."/>
            <person name="Woodward J.R."/>
            <person name="Winckler T."/>
            <person name="Tanaka Y."/>
            <person name="Shaulsky G."/>
            <person name="Schleicher M."/>
            <person name="Weinstock G.M."/>
            <person name="Rosenthal A."/>
            <person name="Cox E.C."/>
            <person name="Chisholm R.L."/>
            <person name="Gibbs R.A."/>
            <person name="Loomis W.F."/>
            <person name="Platzer M."/>
            <person name="Kay R.R."/>
            <person name="Williams J.G."/>
            <person name="Dear P.H."/>
            <person name="Noegel A.A."/>
            <person name="Barrell B.G."/>
            <person name="Kuspa A."/>
        </authorList>
    </citation>
    <scope>NUCLEOTIDE SEQUENCE [LARGE SCALE GENOMIC DNA]</scope>
    <source>
        <strain>AX4</strain>
    </source>
</reference>
<feature type="chain" id="PRO_0000350896" description="Putative uncharacterized protein DDB_G0284297">
    <location>
        <begin position="1"/>
        <end position="60"/>
    </location>
</feature>
<feature type="region of interest" description="Disordered" evidence="1">
    <location>
        <begin position="27"/>
        <end position="50"/>
    </location>
</feature>
<feature type="compositionally biased region" description="Low complexity" evidence="1">
    <location>
        <begin position="29"/>
        <end position="49"/>
    </location>
</feature>
<organism>
    <name type="scientific">Dictyostelium discoideum</name>
    <name type="common">Social amoeba</name>
    <dbReference type="NCBI Taxonomy" id="44689"/>
    <lineage>
        <taxon>Eukaryota</taxon>
        <taxon>Amoebozoa</taxon>
        <taxon>Evosea</taxon>
        <taxon>Eumycetozoa</taxon>
        <taxon>Dictyostelia</taxon>
        <taxon>Dictyosteliales</taxon>
        <taxon>Dictyosteliaceae</taxon>
        <taxon>Dictyostelium</taxon>
    </lineage>
</organism>
<sequence length="60" mass="6831">MEKHNNPGSFTINNNIHDALNSIDTIVKNNNNNNNNNNNNNNNNNNNNNKFFICGCKNQK</sequence>
<evidence type="ECO:0000256" key="1">
    <source>
        <dbReference type="SAM" id="MobiDB-lite"/>
    </source>
</evidence>